<accession>Q72WU0</accession>
<evidence type="ECO:0000255" key="1">
    <source>
        <dbReference type="HAMAP-Rule" id="MF_00227"/>
    </source>
</evidence>
<organism>
    <name type="scientific">Bacillus cereus (strain ATCC 10987 / NRS 248)</name>
    <dbReference type="NCBI Taxonomy" id="222523"/>
    <lineage>
        <taxon>Bacteria</taxon>
        <taxon>Bacillati</taxon>
        <taxon>Bacillota</taxon>
        <taxon>Bacilli</taxon>
        <taxon>Bacillales</taxon>
        <taxon>Bacillaceae</taxon>
        <taxon>Bacillus</taxon>
        <taxon>Bacillus cereus group</taxon>
    </lineage>
</organism>
<feature type="chain" id="PRO_0000198418" description="Ribonuclease P protein component">
    <location>
        <begin position="1"/>
        <end position="115"/>
    </location>
</feature>
<gene>
    <name evidence="1" type="primary">rnpA</name>
    <name type="ordered locus">BCE_5638</name>
</gene>
<sequence>MKKKHRIKKNDEFQTVFQKGKSNANRQFVVYQLDKEEQPNFRIGLSVSKKIGNAVVRNRIKRMIRQSITELKDEIDSGKDFVIIARKPCAEMTYEELKKSLIHVFKRSGMKRIKK</sequence>
<keyword id="KW-0255">Endonuclease</keyword>
<keyword id="KW-0378">Hydrolase</keyword>
<keyword id="KW-0540">Nuclease</keyword>
<keyword id="KW-0694">RNA-binding</keyword>
<keyword id="KW-0819">tRNA processing</keyword>
<name>RNPA_BACC1</name>
<proteinExistence type="inferred from homology"/>
<dbReference type="EC" id="3.1.26.5" evidence="1"/>
<dbReference type="EMBL" id="AE017194">
    <property type="protein sequence ID" value="AAS44538.1"/>
    <property type="molecule type" value="Genomic_DNA"/>
</dbReference>
<dbReference type="SMR" id="Q72WU0"/>
<dbReference type="KEGG" id="bca:BCE_5638"/>
<dbReference type="HOGENOM" id="CLU_117179_9_1_9"/>
<dbReference type="Proteomes" id="UP000002527">
    <property type="component" value="Chromosome"/>
</dbReference>
<dbReference type="GO" id="GO:0030677">
    <property type="term" value="C:ribonuclease P complex"/>
    <property type="evidence" value="ECO:0007669"/>
    <property type="project" value="TreeGrafter"/>
</dbReference>
<dbReference type="GO" id="GO:0042781">
    <property type="term" value="F:3'-tRNA processing endoribonuclease activity"/>
    <property type="evidence" value="ECO:0007669"/>
    <property type="project" value="TreeGrafter"/>
</dbReference>
<dbReference type="GO" id="GO:0004526">
    <property type="term" value="F:ribonuclease P activity"/>
    <property type="evidence" value="ECO:0007669"/>
    <property type="project" value="UniProtKB-UniRule"/>
</dbReference>
<dbReference type="GO" id="GO:0000049">
    <property type="term" value="F:tRNA binding"/>
    <property type="evidence" value="ECO:0007669"/>
    <property type="project" value="UniProtKB-UniRule"/>
</dbReference>
<dbReference type="GO" id="GO:0001682">
    <property type="term" value="P:tRNA 5'-leader removal"/>
    <property type="evidence" value="ECO:0007669"/>
    <property type="project" value="UniProtKB-UniRule"/>
</dbReference>
<dbReference type="FunFam" id="3.30.230.10:FF:000021">
    <property type="entry name" value="Ribonuclease P protein component"/>
    <property type="match status" value="1"/>
</dbReference>
<dbReference type="Gene3D" id="3.30.230.10">
    <property type="match status" value="1"/>
</dbReference>
<dbReference type="HAMAP" id="MF_00227">
    <property type="entry name" value="RNase_P"/>
    <property type="match status" value="1"/>
</dbReference>
<dbReference type="InterPro" id="IPR020568">
    <property type="entry name" value="Ribosomal_Su5_D2-typ_SF"/>
</dbReference>
<dbReference type="InterPro" id="IPR014721">
    <property type="entry name" value="Ribsml_uS5_D2-typ_fold_subgr"/>
</dbReference>
<dbReference type="InterPro" id="IPR000100">
    <property type="entry name" value="RNase_P"/>
</dbReference>
<dbReference type="InterPro" id="IPR020539">
    <property type="entry name" value="RNase_P_CS"/>
</dbReference>
<dbReference type="NCBIfam" id="TIGR00188">
    <property type="entry name" value="rnpA"/>
    <property type="match status" value="1"/>
</dbReference>
<dbReference type="PANTHER" id="PTHR33992">
    <property type="entry name" value="RIBONUCLEASE P PROTEIN COMPONENT"/>
    <property type="match status" value="1"/>
</dbReference>
<dbReference type="PANTHER" id="PTHR33992:SF1">
    <property type="entry name" value="RIBONUCLEASE P PROTEIN COMPONENT"/>
    <property type="match status" value="1"/>
</dbReference>
<dbReference type="Pfam" id="PF00825">
    <property type="entry name" value="Ribonuclease_P"/>
    <property type="match status" value="1"/>
</dbReference>
<dbReference type="SUPFAM" id="SSF54211">
    <property type="entry name" value="Ribosomal protein S5 domain 2-like"/>
    <property type="match status" value="1"/>
</dbReference>
<dbReference type="PROSITE" id="PS00648">
    <property type="entry name" value="RIBONUCLEASE_P"/>
    <property type="match status" value="1"/>
</dbReference>
<reference key="1">
    <citation type="journal article" date="2004" name="Nucleic Acids Res.">
        <title>The genome sequence of Bacillus cereus ATCC 10987 reveals metabolic adaptations and a large plasmid related to Bacillus anthracis pXO1.</title>
        <authorList>
            <person name="Rasko D.A."/>
            <person name="Ravel J."/>
            <person name="Oekstad O.A."/>
            <person name="Helgason E."/>
            <person name="Cer R.Z."/>
            <person name="Jiang L."/>
            <person name="Shores K.A."/>
            <person name="Fouts D.E."/>
            <person name="Tourasse N.J."/>
            <person name="Angiuoli S.V."/>
            <person name="Kolonay J.F."/>
            <person name="Nelson W.C."/>
            <person name="Kolstoe A.-B."/>
            <person name="Fraser C.M."/>
            <person name="Read T.D."/>
        </authorList>
    </citation>
    <scope>NUCLEOTIDE SEQUENCE [LARGE SCALE GENOMIC DNA]</scope>
    <source>
        <strain>ATCC 10987 / NRS 248</strain>
    </source>
</reference>
<protein>
    <recommendedName>
        <fullName evidence="1">Ribonuclease P protein component</fullName>
        <shortName evidence="1">RNase P protein</shortName>
        <shortName evidence="1">RNaseP protein</shortName>
        <ecNumber evidence="1">3.1.26.5</ecNumber>
    </recommendedName>
    <alternativeName>
        <fullName evidence="1">Protein C5</fullName>
    </alternativeName>
</protein>
<comment type="function">
    <text evidence="1">RNaseP catalyzes the removal of the 5'-leader sequence from pre-tRNA to produce the mature 5'-terminus. It can also cleave other RNA substrates such as 4.5S RNA. The protein component plays an auxiliary but essential role in vivo by binding to the 5'-leader sequence and broadening the substrate specificity of the ribozyme.</text>
</comment>
<comment type="catalytic activity">
    <reaction evidence="1">
        <text>Endonucleolytic cleavage of RNA, removing 5'-extranucleotides from tRNA precursor.</text>
        <dbReference type="EC" id="3.1.26.5"/>
    </reaction>
</comment>
<comment type="subunit">
    <text evidence="1">Consists of a catalytic RNA component (M1 or rnpB) and a protein subunit.</text>
</comment>
<comment type="similarity">
    <text evidence="1">Belongs to the RnpA family.</text>
</comment>